<accession>Q00473</accession>
<sequence length="473" mass="52927">MSKLIPVIMAGGIGSRLWPLSREEHPKQFLSVDGELSMLQNTIKRLTPLLAGEPLVICNDSHRFLVAEQLRAINKLANNIILEPVGRNTAPAIALAAFCSLQNVVDEDPLLLVLAADHVIRDEKVFLKAINHAEFFATQGKLVTFGIVPTQAETGYGYICRGEAIGEDAFSVAEFVEKPDFDTARHYVESEKYYWNSGMFLFRASSYLQELKDLSPDIYQACENAVGSINPDLDFIRIDKEAFAMCPSDSIDYAVMEHTRHAVVVPMNAGWSDVGSWSSLWDISKKDPQRNVLHGDIFAYNSKDNYIYSEKSFISTIGVNNLVIVQTADALLVSDKDSVQDVKKVVDYLKANNRNEHKKHLEVFRPWGKFSVIHSGDNYLVKRITVKPGAKFAAQMHLHRAEHWIVVSGTACITKGEEIFTISENESTFIPANTVHTLKNPATIPLELIEIQSGTYLAEDDIIRLEKHSGYLE</sequence>
<feature type="chain" id="PRO_0000194260" description="Mannose-1-phosphate guanylyltransferase">
    <location>
        <begin position="1"/>
        <end position="473"/>
    </location>
</feature>
<proteinExistence type="inferred from homology"/>
<name>RFBM_SALMU</name>
<protein>
    <recommendedName>
        <fullName>Mannose-1-phosphate guanylyltransferase</fullName>
        <ecNumber>2.7.7.13</ecNumber>
    </recommendedName>
    <alternativeName>
        <fullName>GDP-mannose pyrophosphorylase</fullName>
        <shortName>GMP</shortName>
        <shortName>GMPP</shortName>
    </alternativeName>
    <alternativeName>
        <fullName>GTP--mannose-1-phosphate guanylyltransferase</fullName>
    </alternativeName>
</protein>
<reference key="1">
    <citation type="journal article" date="1992" name="Mol. Microbiol.">
        <title>Molecular analysis of the rfb gene cluster of Salmonella serovar muenchen (strain M67): the genetic basis of the polymorphism between groups C2 and B.</title>
        <authorList>
            <person name="Brown P.K."/>
            <person name="Romana L.K."/>
            <person name="Reeves P.R."/>
        </authorList>
    </citation>
    <scope>NUCLEOTIDE SEQUENCE [GENOMIC DNA]</scope>
    <source>
        <strain>M67</strain>
    </source>
</reference>
<keyword id="KW-0342">GTP-binding</keyword>
<keyword id="KW-0448">Lipopolysaccharide biosynthesis</keyword>
<keyword id="KW-0547">Nucleotide-binding</keyword>
<keyword id="KW-0548">Nucleotidyltransferase</keyword>
<keyword id="KW-0808">Transferase</keyword>
<organism>
    <name type="scientific">Salmonella muenchen</name>
    <dbReference type="NCBI Taxonomy" id="596"/>
    <lineage>
        <taxon>Bacteria</taxon>
        <taxon>Pseudomonadati</taxon>
        <taxon>Pseudomonadota</taxon>
        <taxon>Gammaproteobacteria</taxon>
        <taxon>Enterobacterales</taxon>
        <taxon>Enterobacteriaceae</taxon>
        <taxon>Salmonella</taxon>
    </lineage>
</organism>
<dbReference type="EC" id="2.7.7.13"/>
<dbReference type="EMBL" id="X61917">
    <property type="protein sequence ID" value="CAA43915.1"/>
    <property type="molecule type" value="Genomic_DNA"/>
</dbReference>
<dbReference type="RefSeq" id="WP_000040079.1">
    <property type="nucleotide sequence ID" value="NZ_VUJE01000001.1"/>
</dbReference>
<dbReference type="SMR" id="Q00473"/>
<dbReference type="PATRIC" id="fig|596.10.peg.4303"/>
<dbReference type="UniPathway" id="UPA00126">
    <property type="reaction ID" value="UER00930"/>
</dbReference>
<dbReference type="UniPathway" id="UPA00281"/>
<dbReference type="GO" id="GO:0005525">
    <property type="term" value="F:GTP binding"/>
    <property type="evidence" value="ECO:0007669"/>
    <property type="project" value="UniProtKB-KW"/>
</dbReference>
<dbReference type="GO" id="GO:0004475">
    <property type="term" value="F:mannose-1-phosphate guanylyltransferase (GTP) activity"/>
    <property type="evidence" value="ECO:0007669"/>
    <property type="project" value="UniProtKB-EC"/>
</dbReference>
<dbReference type="GO" id="GO:0009298">
    <property type="term" value="P:GDP-mannose biosynthetic process"/>
    <property type="evidence" value="ECO:0007669"/>
    <property type="project" value="UniProtKB-UniPathway"/>
</dbReference>
<dbReference type="GO" id="GO:0009243">
    <property type="term" value="P:O antigen biosynthetic process"/>
    <property type="evidence" value="ECO:0007669"/>
    <property type="project" value="UniProtKB-UniPathway"/>
</dbReference>
<dbReference type="CDD" id="cd02213">
    <property type="entry name" value="cupin_PMI_typeII_C"/>
    <property type="match status" value="1"/>
</dbReference>
<dbReference type="CDD" id="cd02509">
    <property type="entry name" value="GDP-M1P_Guanylyltransferase"/>
    <property type="match status" value="1"/>
</dbReference>
<dbReference type="FunFam" id="3.90.550.10:FF:000046">
    <property type="entry name" value="Mannose-1-phosphate guanylyltransferase (GDP)"/>
    <property type="match status" value="1"/>
</dbReference>
<dbReference type="FunFam" id="2.60.120.10:FF:000032">
    <property type="entry name" value="Mannose-1-phosphate guanylyltransferase/mannose-6-phosphate isomerase"/>
    <property type="match status" value="1"/>
</dbReference>
<dbReference type="Gene3D" id="2.60.120.10">
    <property type="entry name" value="Jelly Rolls"/>
    <property type="match status" value="1"/>
</dbReference>
<dbReference type="Gene3D" id="3.90.550.10">
    <property type="entry name" value="Spore Coat Polysaccharide Biosynthesis Protein SpsA, Chain A"/>
    <property type="match status" value="1"/>
</dbReference>
<dbReference type="InterPro" id="IPR049577">
    <property type="entry name" value="GMPP_N"/>
</dbReference>
<dbReference type="InterPro" id="IPR006375">
    <property type="entry name" value="Man1P_GuaTrfase/Man6P_Isoase"/>
</dbReference>
<dbReference type="InterPro" id="IPR001538">
    <property type="entry name" value="Man6P_isomerase-2_C"/>
</dbReference>
<dbReference type="InterPro" id="IPR054566">
    <property type="entry name" value="ManC/GMP-like_b-helix"/>
</dbReference>
<dbReference type="InterPro" id="IPR051161">
    <property type="entry name" value="Mannose-6P_isomerase_type2"/>
</dbReference>
<dbReference type="InterPro" id="IPR005835">
    <property type="entry name" value="NTP_transferase_dom"/>
</dbReference>
<dbReference type="InterPro" id="IPR029044">
    <property type="entry name" value="Nucleotide-diphossugar_trans"/>
</dbReference>
<dbReference type="InterPro" id="IPR014710">
    <property type="entry name" value="RmlC-like_jellyroll"/>
</dbReference>
<dbReference type="InterPro" id="IPR011051">
    <property type="entry name" value="RmlC_Cupin_sf"/>
</dbReference>
<dbReference type="NCBIfam" id="TIGR01479">
    <property type="entry name" value="GMP_PMI"/>
    <property type="match status" value="1"/>
</dbReference>
<dbReference type="PANTHER" id="PTHR46390">
    <property type="entry name" value="MANNOSE-1-PHOSPHATE GUANYLYLTRANSFERASE"/>
    <property type="match status" value="1"/>
</dbReference>
<dbReference type="PANTHER" id="PTHR46390:SF1">
    <property type="entry name" value="MANNOSE-1-PHOSPHATE GUANYLYLTRANSFERASE"/>
    <property type="match status" value="1"/>
</dbReference>
<dbReference type="Pfam" id="PF22640">
    <property type="entry name" value="ManC_GMP_beta-helix"/>
    <property type="match status" value="1"/>
</dbReference>
<dbReference type="Pfam" id="PF01050">
    <property type="entry name" value="MannoseP_isomer"/>
    <property type="match status" value="1"/>
</dbReference>
<dbReference type="Pfam" id="PF00483">
    <property type="entry name" value="NTP_transferase"/>
    <property type="match status" value="1"/>
</dbReference>
<dbReference type="SUPFAM" id="SSF53448">
    <property type="entry name" value="Nucleotide-diphospho-sugar transferases"/>
    <property type="match status" value="1"/>
</dbReference>
<dbReference type="SUPFAM" id="SSF51182">
    <property type="entry name" value="RmlC-like cupins"/>
    <property type="match status" value="1"/>
</dbReference>
<evidence type="ECO:0000250" key="1"/>
<evidence type="ECO:0000305" key="2"/>
<gene>
    <name type="primary">rfbM</name>
</gene>
<comment type="function">
    <text>Involved in GDP-mannose biosynthesis which serves as the activated sugar nucleotide precursor for mannose residues in cell surface polysaccharides. This enzyme participates in synthesis of the LPS group C2 O antigen.</text>
</comment>
<comment type="catalytic activity">
    <reaction>
        <text>alpha-D-mannose 1-phosphate + GTP + H(+) = GDP-alpha-D-mannose + diphosphate</text>
        <dbReference type="Rhea" id="RHEA:15229"/>
        <dbReference type="ChEBI" id="CHEBI:15378"/>
        <dbReference type="ChEBI" id="CHEBI:33019"/>
        <dbReference type="ChEBI" id="CHEBI:37565"/>
        <dbReference type="ChEBI" id="CHEBI:57527"/>
        <dbReference type="ChEBI" id="CHEBI:58409"/>
        <dbReference type="EC" id="2.7.7.13"/>
    </reaction>
</comment>
<comment type="pathway">
    <text>Nucleotide-sugar biosynthesis; GDP-alpha-D-mannose biosynthesis; GDP-alpha-D-mannose from alpha-D-mannose 1-phosphate (GTP route): step 1/1.</text>
</comment>
<comment type="pathway">
    <text>Bacterial outer membrane biogenesis; LPS O-antigen biosynthesis.</text>
</comment>
<comment type="subunit">
    <text evidence="1">Homodimer.</text>
</comment>
<comment type="similarity">
    <text evidence="2">Belongs to the mannose-6-phosphate isomerase type 2 family.</text>
</comment>